<reference key="1">
    <citation type="submission" date="2008-04" db="EMBL/GenBank/DDBJ databases">
        <title>Complete sequence of Clostridium botulinum strain Eklund.</title>
        <authorList>
            <person name="Brinkac L.M."/>
            <person name="Brown J.L."/>
            <person name="Bruce D."/>
            <person name="Detter C."/>
            <person name="Munk C."/>
            <person name="Smith L.A."/>
            <person name="Smith T.J."/>
            <person name="Sutton G."/>
            <person name="Brettin T.S."/>
        </authorList>
    </citation>
    <scope>NUCLEOTIDE SEQUENCE [LARGE SCALE GENOMIC DNA]</scope>
    <source>
        <strain>Eklund 17B / Type B</strain>
    </source>
</reference>
<name>RS12_CLOBB</name>
<dbReference type="EMBL" id="CP001056">
    <property type="protein sequence ID" value="ACD24789.1"/>
    <property type="molecule type" value="Genomic_DNA"/>
</dbReference>
<dbReference type="SMR" id="B2TIH0"/>
<dbReference type="KEGG" id="cbk:CLL_A0233"/>
<dbReference type="PATRIC" id="fig|935198.13.peg.207"/>
<dbReference type="HOGENOM" id="CLU_104295_1_2_9"/>
<dbReference type="Proteomes" id="UP000001195">
    <property type="component" value="Chromosome"/>
</dbReference>
<dbReference type="GO" id="GO:0015935">
    <property type="term" value="C:small ribosomal subunit"/>
    <property type="evidence" value="ECO:0007669"/>
    <property type="project" value="InterPro"/>
</dbReference>
<dbReference type="GO" id="GO:0019843">
    <property type="term" value="F:rRNA binding"/>
    <property type="evidence" value="ECO:0007669"/>
    <property type="project" value="UniProtKB-UniRule"/>
</dbReference>
<dbReference type="GO" id="GO:0003735">
    <property type="term" value="F:structural constituent of ribosome"/>
    <property type="evidence" value="ECO:0007669"/>
    <property type="project" value="InterPro"/>
</dbReference>
<dbReference type="GO" id="GO:0000049">
    <property type="term" value="F:tRNA binding"/>
    <property type="evidence" value="ECO:0007669"/>
    <property type="project" value="UniProtKB-UniRule"/>
</dbReference>
<dbReference type="GO" id="GO:0006412">
    <property type="term" value="P:translation"/>
    <property type="evidence" value="ECO:0007669"/>
    <property type="project" value="UniProtKB-UniRule"/>
</dbReference>
<dbReference type="CDD" id="cd03368">
    <property type="entry name" value="Ribosomal_S12"/>
    <property type="match status" value="1"/>
</dbReference>
<dbReference type="FunFam" id="2.40.50.140:FF:000001">
    <property type="entry name" value="30S ribosomal protein S12"/>
    <property type="match status" value="1"/>
</dbReference>
<dbReference type="Gene3D" id="2.40.50.140">
    <property type="entry name" value="Nucleic acid-binding proteins"/>
    <property type="match status" value="1"/>
</dbReference>
<dbReference type="HAMAP" id="MF_00403_B">
    <property type="entry name" value="Ribosomal_uS12_B"/>
    <property type="match status" value="1"/>
</dbReference>
<dbReference type="InterPro" id="IPR012340">
    <property type="entry name" value="NA-bd_OB-fold"/>
</dbReference>
<dbReference type="InterPro" id="IPR006032">
    <property type="entry name" value="Ribosomal_uS12"/>
</dbReference>
<dbReference type="InterPro" id="IPR005679">
    <property type="entry name" value="Ribosomal_uS12_bac"/>
</dbReference>
<dbReference type="NCBIfam" id="TIGR00981">
    <property type="entry name" value="rpsL_bact"/>
    <property type="match status" value="1"/>
</dbReference>
<dbReference type="PANTHER" id="PTHR11652">
    <property type="entry name" value="30S RIBOSOMAL PROTEIN S12 FAMILY MEMBER"/>
    <property type="match status" value="1"/>
</dbReference>
<dbReference type="Pfam" id="PF00164">
    <property type="entry name" value="Ribosom_S12_S23"/>
    <property type="match status" value="1"/>
</dbReference>
<dbReference type="PIRSF" id="PIRSF002133">
    <property type="entry name" value="Ribosomal_S12/S23"/>
    <property type="match status" value="1"/>
</dbReference>
<dbReference type="PRINTS" id="PR01034">
    <property type="entry name" value="RIBOSOMALS12"/>
</dbReference>
<dbReference type="SUPFAM" id="SSF50249">
    <property type="entry name" value="Nucleic acid-binding proteins"/>
    <property type="match status" value="1"/>
</dbReference>
<dbReference type="PROSITE" id="PS00055">
    <property type="entry name" value="RIBOSOMAL_S12"/>
    <property type="match status" value="1"/>
</dbReference>
<sequence>MPTISQLVRKGRKSTAVKSTAPALKECPQKRGVCTVVKTTTPKKPNSALRKIARVRLTNGFEVTAYIGGVGHNLQEHSVVLIRGGRVKDLPGVRYHIVRGALDCAGVANRMQGRSKYGAKKPKQK</sequence>
<protein>
    <recommendedName>
        <fullName evidence="2">Small ribosomal subunit protein uS12</fullName>
    </recommendedName>
    <alternativeName>
        <fullName evidence="3">30S ribosomal protein S12</fullName>
    </alternativeName>
</protein>
<proteinExistence type="inferred from homology"/>
<keyword id="KW-0488">Methylation</keyword>
<keyword id="KW-0687">Ribonucleoprotein</keyword>
<keyword id="KW-0689">Ribosomal protein</keyword>
<keyword id="KW-0694">RNA-binding</keyword>
<keyword id="KW-0699">rRNA-binding</keyword>
<keyword id="KW-0820">tRNA-binding</keyword>
<evidence type="ECO:0000250" key="1"/>
<evidence type="ECO:0000255" key="2">
    <source>
        <dbReference type="HAMAP-Rule" id="MF_00403"/>
    </source>
</evidence>
<evidence type="ECO:0000305" key="3"/>
<accession>B2TIH0</accession>
<gene>
    <name evidence="2" type="primary">rpsL</name>
    <name type="ordered locus">CLL_A0233</name>
</gene>
<feature type="chain" id="PRO_1000194146" description="Small ribosomal subunit protein uS12">
    <location>
        <begin position="1"/>
        <end position="125"/>
    </location>
</feature>
<feature type="modified residue" description="3-methylthioaspartic acid" evidence="1">
    <location>
        <position position="89"/>
    </location>
</feature>
<comment type="function">
    <text evidence="2">With S4 and S5 plays an important role in translational accuracy.</text>
</comment>
<comment type="function">
    <text evidence="2">Interacts with and stabilizes bases of the 16S rRNA that are involved in tRNA selection in the A site and with the mRNA backbone. Located at the interface of the 30S and 50S subunits, it traverses the body of the 30S subunit contacting proteins on the other side and probably holding the rRNA structure together. The combined cluster of proteins S8, S12 and S17 appears to hold together the shoulder and platform of the 30S subunit.</text>
</comment>
<comment type="subunit">
    <text evidence="2">Part of the 30S ribosomal subunit. Contacts proteins S8 and S17. May interact with IF1 in the 30S initiation complex.</text>
</comment>
<comment type="similarity">
    <text evidence="2">Belongs to the universal ribosomal protein uS12 family.</text>
</comment>
<organism>
    <name type="scientific">Clostridium botulinum (strain Eklund 17B / Type B)</name>
    <dbReference type="NCBI Taxonomy" id="935198"/>
    <lineage>
        <taxon>Bacteria</taxon>
        <taxon>Bacillati</taxon>
        <taxon>Bacillota</taxon>
        <taxon>Clostridia</taxon>
        <taxon>Eubacteriales</taxon>
        <taxon>Clostridiaceae</taxon>
        <taxon>Clostridium</taxon>
    </lineage>
</organism>